<accession>P43255</accession>
<accession>Q8GWZ4</accession>
<keyword id="KW-0963">Cytoplasm</keyword>
<keyword id="KW-0217">Developmental protein</keyword>
<keyword id="KW-0539">Nucleus</keyword>
<keyword id="KW-0607">Phytochrome signaling pathway</keyword>
<keyword id="KW-1185">Reference proteome</keyword>
<keyword id="KW-0736">Signalosome</keyword>
<gene>
    <name type="primary">CSN8</name>
    <name type="synonym">COP9</name>
    <name type="synonym">FUS7</name>
    <name type="ordered locus">At4g14110</name>
    <name type="ORF">dl3095c</name>
</gene>
<proteinExistence type="evidence at protein level"/>
<evidence type="ECO:0000255" key="1">
    <source>
        <dbReference type="PROSITE-ProRule" id="PRU01185"/>
    </source>
</evidence>
<evidence type="ECO:0000269" key="2">
    <source>
    </source>
</evidence>
<evidence type="ECO:0000269" key="3">
    <source>
    </source>
</evidence>
<evidence type="ECO:0000269" key="4">
    <source>
    </source>
</evidence>
<evidence type="ECO:0000269" key="5">
    <source>
    </source>
</evidence>
<evidence type="ECO:0000269" key="6">
    <source>
    </source>
</evidence>
<evidence type="ECO:0000269" key="7">
    <source>
    </source>
</evidence>
<evidence type="ECO:0000269" key="8">
    <source>
    </source>
</evidence>
<evidence type="ECO:0000305" key="9"/>
<evidence type="ECO:0000305" key="10">
    <source>
    </source>
</evidence>
<organism>
    <name type="scientific">Arabidopsis thaliana</name>
    <name type="common">Mouse-ear cress</name>
    <dbReference type="NCBI Taxonomy" id="3702"/>
    <lineage>
        <taxon>Eukaryota</taxon>
        <taxon>Viridiplantae</taxon>
        <taxon>Streptophyta</taxon>
        <taxon>Embryophyta</taxon>
        <taxon>Tracheophyta</taxon>
        <taxon>Spermatophyta</taxon>
        <taxon>Magnoliopsida</taxon>
        <taxon>eudicotyledons</taxon>
        <taxon>Gunneridae</taxon>
        <taxon>Pentapetalae</taxon>
        <taxon>rosids</taxon>
        <taxon>malvids</taxon>
        <taxon>Brassicales</taxon>
        <taxon>Brassicaceae</taxon>
        <taxon>Camelineae</taxon>
        <taxon>Arabidopsis</taxon>
    </lineage>
</organism>
<protein>
    <recommendedName>
        <fullName>COP9 signalosome complex subunit 8</fullName>
        <shortName>CSN complex subunit 8</shortName>
    </recommendedName>
    <alternativeName>
        <fullName>Constitutive photomorphogenesis protein 9</fullName>
    </alternativeName>
    <alternativeName>
        <fullName>Protein FUSCA 7</fullName>
    </alternativeName>
</protein>
<feature type="chain" id="PRO_0000121015" description="COP9 signalosome complex subunit 8">
    <location>
        <begin position="1"/>
        <end position="197"/>
    </location>
</feature>
<feature type="domain" description="PCI" evidence="1">
    <location>
        <begin position="20"/>
        <end position="190"/>
    </location>
</feature>
<reference key="1">
    <citation type="journal article" date="1994" name="Cell">
        <title>Arabidopsis COP9 is a component of a novel signaling complex mediating light control of development.</title>
        <authorList>
            <person name="Wei N."/>
            <person name="Chamovitz D.A."/>
            <person name="Deng X.-W."/>
        </authorList>
    </citation>
    <scope>NUCLEOTIDE SEQUENCE [MRNA]</scope>
    <source>
        <strain>cv. Columbia</strain>
    </source>
</reference>
<reference key="2">
    <citation type="journal article" date="1998" name="Nature">
        <title>Analysis of 1.9 Mb of contiguous sequence from chromosome 4 of Arabidopsis thaliana.</title>
        <authorList>
            <person name="Bevan M."/>
            <person name="Bancroft I."/>
            <person name="Bent E."/>
            <person name="Love K."/>
            <person name="Goodman H.M."/>
            <person name="Dean C."/>
            <person name="Bergkamp R."/>
            <person name="Dirkse W."/>
            <person name="van Staveren M."/>
            <person name="Stiekema W."/>
            <person name="Drost L."/>
            <person name="Ridley P."/>
            <person name="Hudson S.-A."/>
            <person name="Patel K."/>
            <person name="Murphy G."/>
            <person name="Piffanelli P."/>
            <person name="Wedler H."/>
            <person name="Wedler E."/>
            <person name="Wambutt R."/>
            <person name="Weitzenegger T."/>
            <person name="Pohl T."/>
            <person name="Terryn N."/>
            <person name="Gielen J."/>
            <person name="Villarroel R."/>
            <person name="De Clercq R."/>
            <person name="van Montagu M."/>
            <person name="Lecharny A."/>
            <person name="Aubourg S."/>
            <person name="Gy I."/>
            <person name="Kreis M."/>
            <person name="Lao N."/>
            <person name="Kavanagh T."/>
            <person name="Hempel S."/>
            <person name="Kotter P."/>
            <person name="Entian K.-D."/>
            <person name="Rieger M."/>
            <person name="Schaefer M."/>
            <person name="Funk B."/>
            <person name="Mueller-Auer S."/>
            <person name="Silvey M."/>
            <person name="James R."/>
            <person name="Monfort A."/>
            <person name="Pons A."/>
            <person name="Puigdomenech P."/>
            <person name="Douka A."/>
            <person name="Voukelatou E."/>
            <person name="Milioni D."/>
            <person name="Hatzopoulos P."/>
            <person name="Piravandi E."/>
            <person name="Obermaier B."/>
            <person name="Hilbert H."/>
            <person name="Duesterhoeft A."/>
            <person name="Moores T."/>
            <person name="Jones J.D.G."/>
            <person name="Eneva T."/>
            <person name="Palme K."/>
            <person name="Benes V."/>
            <person name="Rechmann S."/>
            <person name="Ansorge W."/>
            <person name="Cooke R."/>
            <person name="Berger C."/>
            <person name="Delseny M."/>
            <person name="Voet M."/>
            <person name="Volckaert G."/>
            <person name="Mewes H.-W."/>
            <person name="Klosterman S."/>
            <person name="Schueller C."/>
            <person name="Chalwatzis N."/>
        </authorList>
    </citation>
    <scope>NUCLEOTIDE SEQUENCE [LARGE SCALE GENOMIC DNA]</scope>
    <source>
        <strain>cv. Columbia</strain>
    </source>
</reference>
<reference key="3">
    <citation type="journal article" date="1999" name="Nature">
        <title>Sequence and analysis of chromosome 4 of the plant Arabidopsis thaliana.</title>
        <authorList>
            <person name="Mayer K.F.X."/>
            <person name="Schueller C."/>
            <person name="Wambutt R."/>
            <person name="Murphy G."/>
            <person name="Volckaert G."/>
            <person name="Pohl T."/>
            <person name="Duesterhoeft A."/>
            <person name="Stiekema W."/>
            <person name="Entian K.-D."/>
            <person name="Terryn N."/>
            <person name="Harris B."/>
            <person name="Ansorge W."/>
            <person name="Brandt P."/>
            <person name="Grivell L.A."/>
            <person name="Rieger M."/>
            <person name="Weichselgartner M."/>
            <person name="de Simone V."/>
            <person name="Obermaier B."/>
            <person name="Mache R."/>
            <person name="Mueller M."/>
            <person name="Kreis M."/>
            <person name="Delseny M."/>
            <person name="Puigdomenech P."/>
            <person name="Watson M."/>
            <person name="Schmidtheini T."/>
            <person name="Reichert B."/>
            <person name="Portetelle D."/>
            <person name="Perez-Alonso M."/>
            <person name="Boutry M."/>
            <person name="Bancroft I."/>
            <person name="Vos P."/>
            <person name="Hoheisel J."/>
            <person name="Zimmermann W."/>
            <person name="Wedler H."/>
            <person name="Ridley P."/>
            <person name="Langham S.-A."/>
            <person name="McCullagh B."/>
            <person name="Bilham L."/>
            <person name="Robben J."/>
            <person name="van der Schueren J."/>
            <person name="Grymonprez B."/>
            <person name="Chuang Y.-J."/>
            <person name="Vandenbussche F."/>
            <person name="Braeken M."/>
            <person name="Weltjens I."/>
            <person name="Voet M."/>
            <person name="Bastiaens I."/>
            <person name="Aert R."/>
            <person name="Defoor E."/>
            <person name="Weitzenegger T."/>
            <person name="Bothe G."/>
            <person name="Ramsperger U."/>
            <person name="Hilbert H."/>
            <person name="Braun M."/>
            <person name="Holzer E."/>
            <person name="Brandt A."/>
            <person name="Peters S."/>
            <person name="van Staveren M."/>
            <person name="Dirkse W."/>
            <person name="Mooijman P."/>
            <person name="Klein Lankhorst R."/>
            <person name="Rose M."/>
            <person name="Hauf J."/>
            <person name="Koetter P."/>
            <person name="Berneiser S."/>
            <person name="Hempel S."/>
            <person name="Feldpausch M."/>
            <person name="Lamberth S."/>
            <person name="Van den Daele H."/>
            <person name="De Keyser A."/>
            <person name="Buysshaert C."/>
            <person name="Gielen J."/>
            <person name="Villarroel R."/>
            <person name="De Clercq R."/>
            <person name="van Montagu M."/>
            <person name="Rogers J."/>
            <person name="Cronin A."/>
            <person name="Quail M.A."/>
            <person name="Bray-Allen S."/>
            <person name="Clark L."/>
            <person name="Doggett J."/>
            <person name="Hall S."/>
            <person name="Kay M."/>
            <person name="Lennard N."/>
            <person name="McLay K."/>
            <person name="Mayes R."/>
            <person name="Pettett A."/>
            <person name="Rajandream M.A."/>
            <person name="Lyne M."/>
            <person name="Benes V."/>
            <person name="Rechmann S."/>
            <person name="Borkova D."/>
            <person name="Bloecker H."/>
            <person name="Scharfe M."/>
            <person name="Grimm M."/>
            <person name="Loehnert T.-H."/>
            <person name="Dose S."/>
            <person name="de Haan M."/>
            <person name="Maarse A.C."/>
            <person name="Schaefer M."/>
            <person name="Mueller-Auer S."/>
            <person name="Gabel C."/>
            <person name="Fuchs M."/>
            <person name="Fartmann B."/>
            <person name="Granderath K."/>
            <person name="Dauner D."/>
            <person name="Herzl A."/>
            <person name="Neumann S."/>
            <person name="Argiriou A."/>
            <person name="Vitale D."/>
            <person name="Liguori R."/>
            <person name="Piravandi E."/>
            <person name="Massenet O."/>
            <person name="Quigley F."/>
            <person name="Clabauld G."/>
            <person name="Muendlein A."/>
            <person name="Felber R."/>
            <person name="Schnabl S."/>
            <person name="Hiller R."/>
            <person name="Schmidt W."/>
            <person name="Lecharny A."/>
            <person name="Aubourg S."/>
            <person name="Chefdor F."/>
            <person name="Cooke R."/>
            <person name="Berger C."/>
            <person name="Monfort A."/>
            <person name="Casacuberta E."/>
            <person name="Gibbons T."/>
            <person name="Weber N."/>
            <person name="Vandenbol M."/>
            <person name="Bargues M."/>
            <person name="Terol J."/>
            <person name="Torres A."/>
            <person name="Perez-Perez A."/>
            <person name="Purnelle B."/>
            <person name="Bent E."/>
            <person name="Johnson S."/>
            <person name="Tacon D."/>
            <person name="Jesse T."/>
            <person name="Heijnen L."/>
            <person name="Schwarz S."/>
            <person name="Scholler P."/>
            <person name="Heber S."/>
            <person name="Francs P."/>
            <person name="Bielke C."/>
            <person name="Frishman D."/>
            <person name="Haase D."/>
            <person name="Lemcke K."/>
            <person name="Mewes H.-W."/>
            <person name="Stocker S."/>
            <person name="Zaccaria P."/>
            <person name="Bevan M."/>
            <person name="Wilson R.K."/>
            <person name="de la Bastide M."/>
            <person name="Habermann K."/>
            <person name="Parnell L."/>
            <person name="Dedhia N."/>
            <person name="Gnoj L."/>
            <person name="Schutz K."/>
            <person name="Huang E."/>
            <person name="Spiegel L."/>
            <person name="Sekhon M."/>
            <person name="Murray J."/>
            <person name="Sheet P."/>
            <person name="Cordes M."/>
            <person name="Abu-Threideh J."/>
            <person name="Stoneking T."/>
            <person name="Kalicki J."/>
            <person name="Graves T."/>
            <person name="Harmon G."/>
            <person name="Edwards J."/>
            <person name="Latreille P."/>
            <person name="Courtney L."/>
            <person name="Cloud J."/>
            <person name="Abbott A."/>
            <person name="Scott K."/>
            <person name="Johnson D."/>
            <person name="Minx P."/>
            <person name="Bentley D."/>
            <person name="Fulton B."/>
            <person name="Miller N."/>
            <person name="Greco T."/>
            <person name="Kemp K."/>
            <person name="Kramer J."/>
            <person name="Fulton L."/>
            <person name="Mardis E."/>
            <person name="Dante M."/>
            <person name="Pepin K."/>
            <person name="Hillier L.W."/>
            <person name="Nelson J."/>
            <person name="Spieth J."/>
            <person name="Ryan E."/>
            <person name="Andrews S."/>
            <person name="Geisel C."/>
            <person name="Layman D."/>
            <person name="Du H."/>
            <person name="Ali J."/>
            <person name="Berghoff A."/>
            <person name="Jones K."/>
            <person name="Drone K."/>
            <person name="Cotton M."/>
            <person name="Joshu C."/>
            <person name="Antonoiu B."/>
            <person name="Zidanic M."/>
            <person name="Strong C."/>
            <person name="Sun H."/>
            <person name="Lamar B."/>
            <person name="Yordan C."/>
            <person name="Ma P."/>
            <person name="Zhong J."/>
            <person name="Preston R."/>
            <person name="Vil D."/>
            <person name="Shekher M."/>
            <person name="Matero A."/>
            <person name="Shah R."/>
            <person name="Swaby I.K."/>
            <person name="O'Shaughnessy A."/>
            <person name="Rodriguez M."/>
            <person name="Hoffman J."/>
            <person name="Till S."/>
            <person name="Granat S."/>
            <person name="Shohdy N."/>
            <person name="Hasegawa A."/>
            <person name="Hameed A."/>
            <person name="Lodhi M."/>
            <person name="Johnson A."/>
            <person name="Chen E."/>
            <person name="Marra M.A."/>
            <person name="Martienssen R."/>
            <person name="McCombie W.R."/>
        </authorList>
    </citation>
    <scope>NUCLEOTIDE SEQUENCE [LARGE SCALE GENOMIC DNA]</scope>
    <source>
        <strain>cv. Columbia</strain>
    </source>
</reference>
<reference key="4">
    <citation type="journal article" date="2017" name="Plant J.">
        <title>Araport11: a complete reannotation of the Arabidopsis thaliana reference genome.</title>
        <authorList>
            <person name="Cheng C.Y."/>
            <person name="Krishnakumar V."/>
            <person name="Chan A.P."/>
            <person name="Thibaud-Nissen F."/>
            <person name="Schobel S."/>
            <person name="Town C.D."/>
        </authorList>
    </citation>
    <scope>GENOME REANNOTATION</scope>
    <source>
        <strain>cv. Columbia</strain>
    </source>
</reference>
<reference key="5">
    <citation type="journal article" date="2002" name="Science">
        <title>Functional annotation of a full-length Arabidopsis cDNA collection.</title>
        <authorList>
            <person name="Seki M."/>
            <person name="Narusaka M."/>
            <person name="Kamiya A."/>
            <person name="Ishida J."/>
            <person name="Satou M."/>
            <person name="Sakurai T."/>
            <person name="Nakajima M."/>
            <person name="Enju A."/>
            <person name="Akiyama K."/>
            <person name="Oono Y."/>
            <person name="Muramatsu M."/>
            <person name="Hayashizaki Y."/>
            <person name="Kawai J."/>
            <person name="Carninci P."/>
            <person name="Itoh M."/>
            <person name="Ishii Y."/>
            <person name="Arakawa T."/>
            <person name="Shibata K."/>
            <person name="Shinagawa A."/>
            <person name="Shinozaki K."/>
        </authorList>
    </citation>
    <scope>NUCLEOTIDE SEQUENCE [LARGE SCALE MRNA] OF 132-197</scope>
    <source>
        <strain>cv. Columbia</strain>
    </source>
</reference>
<reference key="6">
    <citation type="journal article" date="2003" name="Science">
        <title>Empirical analysis of transcriptional activity in the Arabidopsis genome.</title>
        <authorList>
            <person name="Yamada K."/>
            <person name="Lim J."/>
            <person name="Dale J.M."/>
            <person name="Chen H."/>
            <person name="Shinn P."/>
            <person name="Palm C.J."/>
            <person name="Southwick A.M."/>
            <person name="Wu H.C."/>
            <person name="Kim C.J."/>
            <person name="Nguyen M."/>
            <person name="Pham P.K."/>
            <person name="Cheuk R.F."/>
            <person name="Karlin-Newmann G."/>
            <person name="Liu S.X."/>
            <person name="Lam B."/>
            <person name="Sakano H."/>
            <person name="Wu T."/>
            <person name="Yu G."/>
            <person name="Miranda M."/>
            <person name="Quach H.L."/>
            <person name="Tripp M."/>
            <person name="Chang C.H."/>
            <person name="Lee J.M."/>
            <person name="Toriumi M.J."/>
            <person name="Chan M.M."/>
            <person name="Tang C.C."/>
            <person name="Onodera C.S."/>
            <person name="Deng J.M."/>
            <person name="Akiyama K."/>
            <person name="Ansari Y."/>
            <person name="Arakawa T."/>
            <person name="Banh J."/>
            <person name="Banno F."/>
            <person name="Bowser L."/>
            <person name="Brooks S.Y."/>
            <person name="Carninci P."/>
            <person name="Chao Q."/>
            <person name="Choy N."/>
            <person name="Enju A."/>
            <person name="Goldsmith A.D."/>
            <person name="Gurjal M."/>
            <person name="Hansen N.F."/>
            <person name="Hayashizaki Y."/>
            <person name="Johnson-Hopson C."/>
            <person name="Hsuan V.W."/>
            <person name="Iida K."/>
            <person name="Karnes M."/>
            <person name="Khan S."/>
            <person name="Koesema E."/>
            <person name="Ishida J."/>
            <person name="Jiang P.X."/>
            <person name="Jones T."/>
            <person name="Kawai J."/>
            <person name="Kamiya A."/>
            <person name="Meyers C."/>
            <person name="Nakajima M."/>
            <person name="Narusaka M."/>
            <person name="Seki M."/>
            <person name="Sakurai T."/>
            <person name="Satou M."/>
            <person name="Tamse R."/>
            <person name="Vaysberg M."/>
            <person name="Wallender E.K."/>
            <person name="Wong C."/>
            <person name="Yamamura Y."/>
            <person name="Yuan S."/>
            <person name="Shinozaki K."/>
            <person name="Davis R.W."/>
            <person name="Theologis A."/>
            <person name="Ecker J.R."/>
        </authorList>
    </citation>
    <scope>NUCLEOTIDE SEQUENCE [LARGE SCALE MRNA] OF 144-197</scope>
    <source>
        <strain>cv. Columbia</strain>
    </source>
</reference>
<reference key="7">
    <citation type="journal article" date="1996" name="Cell">
        <title>The COP9 complex, a novel multisubunit nuclear regulator involved in light control of a plant developmental switch.</title>
        <authorList>
            <person name="Chamovitz D.A."/>
            <person name="Wei N."/>
            <person name="Osterlund M.T."/>
            <person name="von Arnim A.G."/>
            <person name="Staub J.M."/>
            <person name="Matsui M."/>
            <person name="Deng X.-W."/>
        </authorList>
    </citation>
    <scope>COMPONENT OF THE COP9 COMPLEX WITH CSN1</scope>
</reference>
<reference key="8">
    <citation type="journal article" date="1996" name="Plant Cell">
        <title>Evidence for FUS6 as a component of the nuclear-localized COP9 complex in Arabidopsis.</title>
        <authorList>
            <person name="Staub J.M."/>
            <person name="Wei N."/>
            <person name="Deng X.-W."/>
        </authorList>
    </citation>
    <scope>SUBCELLULAR LOCATION</scope>
    <scope>TISSUE SPECIFICITY</scope>
</reference>
<reference key="9">
    <citation type="journal article" date="2001" name="Science">
        <title>Interactions of the COP9 signalosome with the E3 ubiquitin ligase SCF(TIR1) in mediating auxin response.</title>
        <authorList>
            <person name="Schwechheimer C."/>
            <person name="Serino G."/>
            <person name="Callis J."/>
            <person name="Crosby W.L."/>
            <person name="Lyapina S."/>
            <person name="Deshaies R.J."/>
            <person name="Gray W.M."/>
            <person name="Estelle M."/>
            <person name="Deng X.-W."/>
        </authorList>
    </citation>
    <scope>FUNCTION</scope>
</reference>
<reference key="10">
    <citation type="journal article" date="2002" name="Genes Dev.">
        <title>Arabidopsis COP10 is a ubiquitin-conjugating enzyme variant that acts together with COP1 and the COP9 signalosome in repressing photomorphogenesis.</title>
        <authorList>
            <person name="Suzuki G."/>
            <person name="Yanagawa Y."/>
            <person name="Kwok S.F."/>
            <person name="Matsui M."/>
            <person name="Deng X.-W."/>
        </authorList>
    </citation>
    <scope>INTERACTION WITH COP10</scope>
</reference>
<reference key="11">
    <citation type="journal article" date="2003" name="Plant Cell">
        <title>Characterization of the last subunit of the Arabidopsis COP9 signalosome: implications for the overall structure and origin of the complex.</title>
        <authorList>
            <person name="Serino G."/>
            <person name="Su H."/>
            <person name="Peng Z."/>
            <person name="Tsuge T."/>
            <person name="Wei N."/>
            <person name="Gu H."/>
            <person name="Deng X.-W."/>
        </authorList>
    </citation>
    <scope>INTERACTION WITH CSN4 AND CSN7</scope>
</reference>
<reference key="12">
    <citation type="journal article" date="2004" name="Plant Cell">
        <title>Translational regulation via 5' mRNA leader sequences revealed by mutational analysis of the Arabidopsis translation initiation factor subunit eIF3h.</title>
        <authorList>
            <person name="Kim T.-H."/>
            <person name="Kim B.-H."/>
            <person name="Yahalom A."/>
            <person name="Chamovitz D.A."/>
            <person name="von Arnim A.G."/>
        </authorList>
    </citation>
    <scope>INTERACTION WITH TIF3H1</scope>
</reference>
<reference key="13">
    <citation type="journal article" date="2008" name="Plant Cell">
        <title>The Arabidopsis COP9 signalosome subunit 7 is a model PCI domain protein with subdomains involved in COP9 signalosome assembly.</title>
        <authorList>
            <person name="Dessau M."/>
            <person name="Halimi Y."/>
            <person name="Erez T."/>
            <person name="Chomsky-Hecht O."/>
            <person name="Chamovitz D.A."/>
            <person name="Hirsch J.A."/>
        </authorList>
    </citation>
    <scope>INTERACTION WITH CSN7</scope>
</reference>
<reference key="14">
    <citation type="journal article" date="2008" name="Plant Signal. Behav.">
        <title>Arabidopsis eIF3e interacts with subunits of the ribosome, Cop9 signalosome and proteasome.</title>
        <authorList>
            <person name="Paz-Aviram T."/>
            <person name="Yahalom A."/>
            <person name="Chamovitz D.A."/>
        </authorList>
    </citation>
    <scope>INTERACTION WITH TIF3E1</scope>
</reference>
<name>CSN8_ARATH</name>
<sequence length="197" mass="22547">MDLSPVKEALAAKSFDKIADICDTLMLQVASEGIEYHDDWPYAIHLLGYFYVDDCDSARFLWKRIPTAIKERKPEVVAAWGIGQKLWTHDYAGVYEAIRGYDWSQEAKDMVAAFSDLYTKRMFQLLLSAYSTITIHDLALFLGMTEDDATTYVVENGWTVDAASQMASVKKQAVKREQKVDSSKLQRLTEYVFHLEH</sequence>
<dbReference type="EMBL" id="L32874">
    <property type="protein sequence ID" value="AAA32773.1"/>
    <property type="molecule type" value="mRNA"/>
</dbReference>
<dbReference type="EMBL" id="Z97335">
    <property type="protein sequence ID" value="CAB10190.1"/>
    <property type="molecule type" value="Genomic_DNA"/>
</dbReference>
<dbReference type="EMBL" id="AL161538">
    <property type="protein sequence ID" value="CAB78453.1"/>
    <property type="molecule type" value="Genomic_DNA"/>
</dbReference>
<dbReference type="EMBL" id="CP002687">
    <property type="protein sequence ID" value="AEE83376.1"/>
    <property type="molecule type" value="Genomic_DNA"/>
</dbReference>
<dbReference type="EMBL" id="AK118535">
    <property type="protein sequence ID" value="BAC43138.1"/>
    <property type="status" value="ALT_INIT"/>
    <property type="molecule type" value="mRNA"/>
</dbReference>
<dbReference type="EMBL" id="BT006489">
    <property type="protein sequence ID" value="AAP21297.1"/>
    <property type="molecule type" value="mRNA"/>
</dbReference>
<dbReference type="PIR" id="A54842">
    <property type="entry name" value="A54842"/>
</dbReference>
<dbReference type="RefSeq" id="NP_193147.1">
    <property type="nucleotide sequence ID" value="NM_117488.4"/>
</dbReference>
<dbReference type="SMR" id="P43255"/>
<dbReference type="BioGRID" id="12346">
    <property type="interactions" value="17"/>
</dbReference>
<dbReference type="FunCoup" id="P43255">
    <property type="interactions" value="3803"/>
</dbReference>
<dbReference type="IntAct" id="P43255">
    <property type="interactions" value="12"/>
</dbReference>
<dbReference type="STRING" id="3702.P43255"/>
<dbReference type="PaxDb" id="3702-AT4G14110.1"/>
<dbReference type="ProteomicsDB" id="220370"/>
<dbReference type="DNASU" id="827049"/>
<dbReference type="EnsemblPlants" id="AT4G14110.1">
    <property type="protein sequence ID" value="AT4G14110.1"/>
    <property type="gene ID" value="AT4G14110"/>
</dbReference>
<dbReference type="GeneID" id="827049"/>
<dbReference type="Gramene" id="AT4G14110.1">
    <property type="protein sequence ID" value="AT4G14110.1"/>
    <property type="gene ID" value="AT4G14110"/>
</dbReference>
<dbReference type="KEGG" id="ath:AT4G14110"/>
<dbReference type="Araport" id="AT4G14110"/>
<dbReference type="TAIR" id="AT4G14110">
    <property type="gene designation" value="COP9"/>
</dbReference>
<dbReference type="eggNOG" id="KOG4414">
    <property type="taxonomic scope" value="Eukaryota"/>
</dbReference>
<dbReference type="HOGENOM" id="CLU_098091_0_0_1"/>
<dbReference type="InParanoid" id="P43255"/>
<dbReference type="OMA" id="MRIPDKL"/>
<dbReference type="PhylomeDB" id="P43255"/>
<dbReference type="PRO" id="PR:P43255"/>
<dbReference type="Proteomes" id="UP000006548">
    <property type="component" value="Chromosome 4"/>
</dbReference>
<dbReference type="ExpressionAtlas" id="P43255">
    <property type="expression patterns" value="baseline and differential"/>
</dbReference>
<dbReference type="GO" id="GO:0008180">
    <property type="term" value="C:COP9 signalosome"/>
    <property type="evidence" value="ECO:0000314"/>
    <property type="project" value="TAIR"/>
</dbReference>
<dbReference type="GO" id="GO:0005737">
    <property type="term" value="C:cytoplasm"/>
    <property type="evidence" value="ECO:0007669"/>
    <property type="project" value="UniProtKB-SubCell"/>
</dbReference>
<dbReference type="GO" id="GO:0005634">
    <property type="term" value="C:nucleus"/>
    <property type="evidence" value="ECO:0000314"/>
    <property type="project" value="TAIR"/>
</dbReference>
<dbReference type="GO" id="GO:0004222">
    <property type="term" value="F:metalloendopeptidase activity"/>
    <property type="evidence" value="ECO:0000304"/>
    <property type="project" value="TAIR"/>
</dbReference>
<dbReference type="GO" id="GO:0010387">
    <property type="term" value="P:COP9 signalosome assembly"/>
    <property type="evidence" value="ECO:0000315"/>
    <property type="project" value="TAIR"/>
</dbReference>
<dbReference type="GO" id="GO:0000338">
    <property type="term" value="P:protein deneddylation"/>
    <property type="evidence" value="ECO:0000315"/>
    <property type="project" value="TAIR"/>
</dbReference>
<dbReference type="GO" id="GO:0009585">
    <property type="term" value="P:red, far-red light phototransduction"/>
    <property type="evidence" value="ECO:0007669"/>
    <property type="project" value="UniProtKB-KW"/>
</dbReference>
<dbReference type="GO" id="GO:0009753">
    <property type="term" value="P:response to jasmonic acid"/>
    <property type="evidence" value="ECO:0000315"/>
    <property type="project" value="TAIR"/>
</dbReference>
<dbReference type="GO" id="GO:0009416">
    <property type="term" value="P:response to light stimulus"/>
    <property type="evidence" value="ECO:0000315"/>
    <property type="project" value="TAIR"/>
</dbReference>
<dbReference type="FunFam" id="1.25.40.990:FF:000032">
    <property type="entry name" value="COP9 signalosome complex subunit 8"/>
    <property type="match status" value="1"/>
</dbReference>
<dbReference type="Gene3D" id="1.25.40.990">
    <property type="match status" value="1"/>
</dbReference>
<dbReference type="InterPro" id="IPR033205">
    <property type="entry name" value="COP9_CSN8"/>
</dbReference>
<dbReference type="InterPro" id="IPR033464">
    <property type="entry name" value="CSN8_PSD8_EIF3K"/>
</dbReference>
<dbReference type="InterPro" id="IPR000717">
    <property type="entry name" value="PCI_dom"/>
</dbReference>
<dbReference type="PANTHER" id="PTHR13339">
    <property type="entry name" value="COP9 SIGNALOSOME COMPLEX SUBUNIT 8"/>
    <property type="match status" value="1"/>
</dbReference>
<dbReference type="PANTHER" id="PTHR13339:SF0">
    <property type="entry name" value="COP9 SIGNALOSOME COMPLEX SUBUNIT 8"/>
    <property type="match status" value="1"/>
</dbReference>
<dbReference type="Pfam" id="PF10075">
    <property type="entry name" value="CSN8_PSD8_EIF3K"/>
    <property type="match status" value="1"/>
</dbReference>
<dbReference type="PROSITE" id="PS50250">
    <property type="entry name" value="PCI"/>
    <property type="match status" value="1"/>
</dbReference>
<comment type="function">
    <text evidence="2">Component of the COP9 signalosome complex (CSN), a complex involved in various cellular and developmental processes such as photomorphogenesis and auxin and jasmonate responses. The CSN complex is an essential regulator of the ubiquitin (Ubl) conjugation pathway by mediating the deneddylation of the cullin subunits of SCF-type E3 ligase complexes, leading to decrease the Ubl ligase activity of SCF. It is involved in repression of photomorphogenesis in darkness by regulating the activity of COP1-containing Ubl ligase complexes. The complex is also required for degradation of IAA6 by regulating the activity of the Ubl ligase SCF-TIR complex.</text>
</comment>
<comment type="subunit">
    <text evidence="3 4 5 6 7">Component of the CSN complex, probably composed of CSN1, CSN2, CSN3, CSN4, CSN5 (CSN5A or CSN5B), CSN6 (CSN6A or CSN6B), CSN7 and CSN8. In the complex, it probably interacts directly with CSN4. Interacts with itself and (via PCI domain) with CSN7 (via PCI domain). Interacts with COP10. Binds to the translation initiation factors TIF3E1 and TIF3H1 (PubMed:15548739, PubMed:19704582).</text>
</comment>
<comment type="interaction">
    <interactant intactId="EBI-530981">
        <id>P43255</id>
    </interactant>
    <interactant intactId="EBI-530996">
        <id>P45432</id>
        <label>CSN1</label>
    </interactant>
    <organismsDiffer>false</organismsDiffer>
    <experiments>4</experiments>
</comment>
<comment type="interaction">
    <interactant intactId="EBI-530981">
        <id>P43255</id>
    </interactant>
    <interactant intactId="EBI-531055">
        <id>Q8W575</id>
        <label>CSN3</label>
    </interactant>
    <organismsDiffer>false</organismsDiffer>
    <experiments>6</experiments>
</comment>
<comment type="interaction">
    <interactant intactId="EBI-530981">
        <id>P43255</id>
    </interactant>
    <interactant intactId="EBI-531074">
        <id>Q8L5U0</id>
        <label>CSN4</label>
    </interactant>
    <organismsDiffer>false</organismsDiffer>
    <experiments>3</experiments>
</comment>
<comment type="interaction">
    <interactant intactId="EBI-530981">
        <id>P43255</id>
    </interactant>
    <interactant intactId="EBI-531152">
        <id>Q94JU3</id>
        <label>CSN7</label>
    </interactant>
    <organismsDiffer>false</organismsDiffer>
    <experiments>3</experiments>
</comment>
<comment type="subcellular location">
    <subcellularLocation>
        <location evidence="10">Cytoplasm</location>
    </subcellularLocation>
    <subcellularLocation>
        <location evidence="10">Nucleus</location>
    </subcellularLocation>
</comment>
<comment type="tissue specificity">
    <text evidence="8">Ubiquitous.</text>
</comment>
<comment type="similarity">
    <text evidence="9">Belongs to the CSN8 family.</text>
</comment>
<comment type="sequence caution" evidence="9">
    <conflict type="erroneous initiation">
        <sequence resource="EMBL-CDS" id="BAC43138"/>
    </conflict>
    <text>Truncated N-terminus.</text>
</comment>